<gene>
    <name evidence="1" type="primary">tatB</name>
    <name type="ordered locus">Ssed_4100</name>
</gene>
<name>TATB_SHESH</name>
<dbReference type="EMBL" id="CP000821">
    <property type="protein sequence ID" value="ABV38704.1"/>
    <property type="molecule type" value="Genomic_DNA"/>
</dbReference>
<dbReference type="RefSeq" id="WP_012144434.1">
    <property type="nucleotide sequence ID" value="NC_009831.1"/>
</dbReference>
<dbReference type="SMR" id="A8G0T1"/>
<dbReference type="STRING" id="425104.Ssed_4100"/>
<dbReference type="KEGG" id="sse:Ssed_4100"/>
<dbReference type="eggNOG" id="COG1826">
    <property type="taxonomic scope" value="Bacteria"/>
</dbReference>
<dbReference type="HOGENOM" id="CLU_086034_1_0_6"/>
<dbReference type="OrthoDB" id="9816005at2"/>
<dbReference type="Proteomes" id="UP000002015">
    <property type="component" value="Chromosome"/>
</dbReference>
<dbReference type="GO" id="GO:0033281">
    <property type="term" value="C:TAT protein transport complex"/>
    <property type="evidence" value="ECO:0007669"/>
    <property type="project" value="UniProtKB-UniRule"/>
</dbReference>
<dbReference type="GO" id="GO:0008320">
    <property type="term" value="F:protein transmembrane transporter activity"/>
    <property type="evidence" value="ECO:0007669"/>
    <property type="project" value="UniProtKB-UniRule"/>
</dbReference>
<dbReference type="GO" id="GO:0043953">
    <property type="term" value="P:protein transport by the Tat complex"/>
    <property type="evidence" value="ECO:0007669"/>
    <property type="project" value="UniProtKB-UniRule"/>
</dbReference>
<dbReference type="Gene3D" id="1.20.5.3310">
    <property type="match status" value="1"/>
</dbReference>
<dbReference type="HAMAP" id="MF_00237">
    <property type="entry name" value="TatB"/>
    <property type="match status" value="1"/>
</dbReference>
<dbReference type="InterPro" id="IPR003369">
    <property type="entry name" value="TatA/B/E"/>
</dbReference>
<dbReference type="InterPro" id="IPR018448">
    <property type="entry name" value="TatB"/>
</dbReference>
<dbReference type="NCBIfam" id="TIGR01410">
    <property type="entry name" value="tatB"/>
    <property type="match status" value="1"/>
</dbReference>
<dbReference type="PANTHER" id="PTHR33162">
    <property type="entry name" value="SEC-INDEPENDENT PROTEIN TRANSLOCASE PROTEIN TATA, CHLOROPLASTIC"/>
    <property type="match status" value="1"/>
</dbReference>
<dbReference type="PANTHER" id="PTHR33162:SF1">
    <property type="entry name" value="SEC-INDEPENDENT PROTEIN TRANSLOCASE PROTEIN TATA, CHLOROPLASTIC"/>
    <property type="match status" value="1"/>
</dbReference>
<dbReference type="Pfam" id="PF02416">
    <property type="entry name" value="TatA_B_E"/>
    <property type="match status" value="1"/>
</dbReference>
<dbReference type="PRINTS" id="PR01506">
    <property type="entry name" value="TATBPROTEIN"/>
</dbReference>
<protein>
    <recommendedName>
        <fullName evidence="1">Sec-independent protein translocase protein TatB</fullName>
    </recommendedName>
</protein>
<evidence type="ECO:0000255" key="1">
    <source>
        <dbReference type="HAMAP-Rule" id="MF_00237"/>
    </source>
</evidence>
<evidence type="ECO:0000256" key="2">
    <source>
        <dbReference type="SAM" id="MobiDB-lite"/>
    </source>
</evidence>
<accession>A8G0T1</accession>
<organism>
    <name type="scientific">Shewanella sediminis (strain HAW-EB3)</name>
    <dbReference type="NCBI Taxonomy" id="425104"/>
    <lineage>
        <taxon>Bacteria</taxon>
        <taxon>Pseudomonadati</taxon>
        <taxon>Pseudomonadota</taxon>
        <taxon>Gammaproteobacteria</taxon>
        <taxon>Alteromonadales</taxon>
        <taxon>Shewanellaceae</taxon>
        <taxon>Shewanella</taxon>
    </lineage>
</organism>
<reference key="1">
    <citation type="submission" date="2007-08" db="EMBL/GenBank/DDBJ databases">
        <title>Complete sequence of Shewanella sediminis HAW-EB3.</title>
        <authorList>
            <consortium name="US DOE Joint Genome Institute"/>
            <person name="Copeland A."/>
            <person name="Lucas S."/>
            <person name="Lapidus A."/>
            <person name="Barry K."/>
            <person name="Glavina del Rio T."/>
            <person name="Dalin E."/>
            <person name="Tice H."/>
            <person name="Pitluck S."/>
            <person name="Chertkov O."/>
            <person name="Brettin T."/>
            <person name="Bruce D."/>
            <person name="Detter J.C."/>
            <person name="Han C."/>
            <person name="Schmutz J."/>
            <person name="Larimer F."/>
            <person name="Land M."/>
            <person name="Hauser L."/>
            <person name="Kyrpides N."/>
            <person name="Kim E."/>
            <person name="Zhao J.-S."/>
            <person name="Richardson P."/>
        </authorList>
    </citation>
    <scope>NUCLEOTIDE SEQUENCE [LARGE SCALE GENOMIC DNA]</scope>
    <source>
        <strain>HAW-EB3</strain>
    </source>
</reference>
<keyword id="KW-0997">Cell inner membrane</keyword>
<keyword id="KW-1003">Cell membrane</keyword>
<keyword id="KW-0472">Membrane</keyword>
<keyword id="KW-0653">Protein transport</keyword>
<keyword id="KW-1185">Reference proteome</keyword>
<keyword id="KW-0811">Translocation</keyword>
<keyword id="KW-0812">Transmembrane</keyword>
<keyword id="KW-1133">Transmembrane helix</keyword>
<keyword id="KW-0813">Transport</keyword>
<feature type="chain" id="PRO_1000078328" description="Sec-independent protein translocase protein TatB">
    <location>
        <begin position="1"/>
        <end position="132"/>
    </location>
</feature>
<feature type="transmembrane region" description="Helical" evidence="1">
    <location>
        <begin position="2"/>
        <end position="22"/>
    </location>
</feature>
<feature type="region of interest" description="Disordered" evidence="2">
    <location>
        <begin position="86"/>
        <end position="132"/>
    </location>
</feature>
<feature type="compositionally biased region" description="Low complexity" evidence="2">
    <location>
        <begin position="103"/>
        <end position="115"/>
    </location>
</feature>
<feature type="compositionally biased region" description="Polar residues" evidence="2">
    <location>
        <begin position="117"/>
        <end position="132"/>
    </location>
</feature>
<sequence length="132" mass="14312">MFDGIGFMELLLIGILGLVVLGPERLPVAVRSITGWIRAMKRMANSVKDELEQELKIEELHADLKKAESQGLKNLSPELQESIDQLKSAAQSVNRPYKVEDISPASSSAPVDPAPTETKTAETSANSEKPNG</sequence>
<proteinExistence type="inferred from homology"/>
<comment type="function">
    <text evidence="1">Part of the twin-arginine translocation (Tat) system that transports large folded proteins containing a characteristic twin-arginine motif in their signal peptide across membranes. Together with TatC, TatB is part of a receptor directly interacting with Tat signal peptides. TatB may form an oligomeric binding site that transiently accommodates folded Tat precursor proteins before their translocation.</text>
</comment>
<comment type="subunit">
    <text evidence="1">The Tat system comprises two distinct complexes: a TatABC complex, containing multiple copies of TatA, TatB and TatC subunits, and a separate TatA complex, containing only TatA subunits. Substrates initially bind to the TatABC complex, which probably triggers association of the separate TatA complex to form the active translocon.</text>
</comment>
<comment type="subcellular location">
    <subcellularLocation>
        <location evidence="1">Cell inner membrane</location>
        <topology evidence="1">Single-pass membrane protein</topology>
    </subcellularLocation>
</comment>
<comment type="similarity">
    <text evidence="1">Belongs to the TatB family.</text>
</comment>